<evidence type="ECO:0000255" key="1">
    <source>
        <dbReference type="HAMAP-Rule" id="MF_01073"/>
    </source>
</evidence>
<accession>Q1RDQ8</accession>
<gene>
    <name evidence="1" type="primary">matP</name>
    <name type="ordered locus">UTI89_C1021</name>
</gene>
<name>MATP_ECOUT</name>
<sequence length="150" mass="17723">MKYQQLENLESGWKWKYLVKKHREGELITRYIEASAAQEAVDELLSLENEPVLVNGWIDKHMNPELVNRMKQTIRARRKRHFNAEHQHTRKKSIDLEFIVWQRLAGLAQRRGKTLSETIVQLIEDAENKEKYANKMSSLKQDLQALLGKE</sequence>
<reference key="1">
    <citation type="journal article" date="2006" name="Proc. Natl. Acad. Sci. U.S.A.">
        <title>Identification of genes subject to positive selection in uropathogenic strains of Escherichia coli: a comparative genomics approach.</title>
        <authorList>
            <person name="Chen S.L."/>
            <person name="Hung C.-S."/>
            <person name="Xu J."/>
            <person name="Reigstad C.S."/>
            <person name="Magrini V."/>
            <person name="Sabo A."/>
            <person name="Blasiar D."/>
            <person name="Bieri T."/>
            <person name="Meyer R.R."/>
            <person name="Ozersky P."/>
            <person name="Armstrong J.R."/>
            <person name="Fulton R.S."/>
            <person name="Latreille J.P."/>
            <person name="Spieth J."/>
            <person name="Hooton T.M."/>
            <person name="Mardis E.R."/>
            <person name="Hultgren S.J."/>
            <person name="Gordon J.I."/>
        </authorList>
    </citation>
    <scope>NUCLEOTIDE SEQUENCE [LARGE SCALE GENOMIC DNA]</scope>
    <source>
        <strain>UTI89 / UPEC</strain>
    </source>
</reference>
<comment type="function">
    <text evidence="1">Required for spatial organization of the terminus region of the chromosome (Ter macrodomain) during the cell cycle. Prevents early segregation of duplicated Ter macrodomains during cell division. Binds specifically to matS, which is a 13 bp signature motif repeated within the Ter macrodomain.</text>
</comment>
<comment type="subunit">
    <text evidence="1">Homodimer.</text>
</comment>
<comment type="subcellular location">
    <subcellularLocation>
        <location evidence="1">Cytoplasm</location>
    </subcellularLocation>
</comment>
<comment type="similarity">
    <text evidence="1">Belongs to the MatP family.</text>
</comment>
<dbReference type="EMBL" id="CP000243">
    <property type="protein sequence ID" value="ABE06506.1"/>
    <property type="molecule type" value="Genomic_DNA"/>
</dbReference>
<dbReference type="RefSeq" id="WP_000877153.1">
    <property type="nucleotide sequence ID" value="NZ_CP064825.1"/>
</dbReference>
<dbReference type="SMR" id="Q1RDQ8"/>
<dbReference type="KEGG" id="eci:UTI89_C1021"/>
<dbReference type="HOGENOM" id="CLU_142157_0_0_6"/>
<dbReference type="Proteomes" id="UP000001952">
    <property type="component" value="Chromosome"/>
</dbReference>
<dbReference type="GO" id="GO:0005737">
    <property type="term" value="C:cytoplasm"/>
    <property type="evidence" value="ECO:0007669"/>
    <property type="project" value="UniProtKB-SubCell"/>
</dbReference>
<dbReference type="GO" id="GO:0043565">
    <property type="term" value="F:sequence-specific DNA binding"/>
    <property type="evidence" value="ECO:0007669"/>
    <property type="project" value="UniProtKB-UniRule"/>
</dbReference>
<dbReference type="GO" id="GO:0051301">
    <property type="term" value="P:cell division"/>
    <property type="evidence" value="ECO:0007669"/>
    <property type="project" value="UniProtKB-UniRule"/>
</dbReference>
<dbReference type="GO" id="GO:0006355">
    <property type="term" value="P:regulation of DNA-templated transcription"/>
    <property type="evidence" value="ECO:0007669"/>
    <property type="project" value="InterPro"/>
</dbReference>
<dbReference type="FunFam" id="1.10.1220.10:FF:000004">
    <property type="entry name" value="Macrodomain Ter protein"/>
    <property type="match status" value="1"/>
</dbReference>
<dbReference type="FunFam" id="1.20.1270.380:FF:000001">
    <property type="entry name" value="Macrodomain Ter protein"/>
    <property type="match status" value="1"/>
</dbReference>
<dbReference type="Gene3D" id="1.20.1270.380">
    <property type="entry name" value="MatP, N-terminal domain"/>
    <property type="match status" value="1"/>
</dbReference>
<dbReference type="Gene3D" id="1.10.1220.10">
    <property type="entry name" value="Met repressor-like"/>
    <property type="match status" value="1"/>
</dbReference>
<dbReference type="HAMAP" id="MF_01073">
    <property type="entry name" value="MatP"/>
    <property type="match status" value="1"/>
</dbReference>
<dbReference type="InterPro" id="IPR013321">
    <property type="entry name" value="Arc_rbn_hlx_hlx"/>
</dbReference>
<dbReference type="InterPro" id="IPR009390">
    <property type="entry name" value="MatP"/>
</dbReference>
<dbReference type="InterPro" id="IPR035375">
    <property type="entry name" value="MatP_C"/>
</dbReference>
<dbReference type="InterPro" id="IPR035087">
    <property type="entry name" value="MatP_N"/>
</dbReference>
<dbReference type="InterPro" id="IPR038339">
    <property type="entry name" value="MatP_N_sf"/>
</dbReference>
<dbReference type="NCBIfam" id="NF003471">
    <property type="entry name" value="PRK05097.1"/>
    <property type="match status" value="1"/>
</dbReference>
<dbReference type="Pfam" id="PF06303">
    <property type="entry name" value="MatP"/>
    <property type="match status" value="1"/>
</dbReference>
<dbReference type="Pfam" id="PF17414">
    <property type="entry name" value="MatP_C"/>
    <property type="match status" value="1"/>
</dbReference>
<organism>
    <name type="scientific">Escherichia coli (strain UTI89 / UPEC)</name>
    <dbReference type="NCBI Taxonomy" id="364106"/>
    <lineage>
        <taxon>Bacteria</taxon>
        <taxon>Pseudomonadati</taxon>
        <taxon>Pseudomonadota</taxon>
        <taxon>Gammaproteobacteria</taxon>
        <taxon>Enterobacterales</taxon>
        <taxon>Enterobacteriaceae</taxon>
        <taxon>Escherichia</taxon>
    </lineage>
</organism>
<proteinExistence type="inferred from homology"/>
<keyword id="KW-0131">Cell cycle</keyword>
<keyword id="KW-0132">Cell division</keyword>
<keyword id="KW-0963">Cytoplasm</keyword>
<keyword id="KW-0238">DNA-binding</keyword>
<protein>
    <recommendedName>
        <fullName evidence="1">Macrodomain Ter protein</fullName>
    </recommendedName>
</protein>
<feature type="chain" id="PRO_1000064627" description="Macrodomain Ter protein">
    <location>
        <begin position="1"/>
        <end position="150"/>
    </location>
</feature>